<proteinExistence type="predicted"/>
<keyword id="KW-1185">Reference proteome</keyword>
<reference key="1">
    <citation type="journal article" date="1995" name="Science">
        <title>Whole-genome random sequencing and assembly of Haemophilus influenzae Rd.</title>
        <authorList>
            <person name="Fleischmann R.D."/>
            <person name="Adams M.D."/>
            <person name="White O."/>
            <person name="Clayton R.A."/>
            <person name="Kirkness E.F."/>
            <person name="Kerlavage A.R."/>
            <person name="Bult C.J."/>
            <person name="Tomb J.-F."/>
            <person name="Dougherty B.A."/>
            <person name="Merrick J.M."/>
            <person name="McKenney K."/>
            <person name="Sutton G.G."/>
            <person name="FitzHugh W."/>
            <person name="Fields C.A."/>
            <person name="Gocayne J.D."/>
            <person name="Scott J.D."/>
            <person name="Shirley R."/>
            <person name="Liu L.-I."/>
            <person name="Glodek A."/>
            <person name="Kelley J.M."/>
            <person name="Weidman J.F."/>
            <person name="Phillips C.A."/>
            <person name="Spriggs T."/>
            <person name="Hedblom E."/>
            <person name="Cotton M.D."/>
            <person name="Utterback T.R."/>
            <person name="Hanna M.C."/>
            <person name="Nguyen D.T."/>
            <person name="Saudek D.M."/>
            <person name="Brandon R.C."/>
            <person name="Fine L.D."/>
            <person name="Fritchman J.L."/>
            <person name="Fuhrmann J.L."/>
            <person name="Geoghagen N.S.M."/>
            <person name="Gnehm C.L."/>
            <person name="McDonald L.A."/>
            <person name="Small K.V."/>
            <person name="Fraser C.M."/>
            <person name="Smith H.O."/>
            <person name="Venter J.C."/>
        </authorList>
    </citation>
    <scope>NUCLEOTIDE SEQUENCE [LARGE SCALE GENOMIC DNA]</scope>
    <source>
        <strain>ATCC 51907 / DSM 11121 / KW20 / Rd</strain>
    </source>
</reference>
<name>Y703_HAEIN</name>
<protein>
    <recommendedName>
        <fullName>Uncharacterized protein HI_0703</fullName>
    </recommendedName>
</protein>
<feature type="chain" id="PRO_0000077946" description="Uncharacterized protein HI_0703">
    <location>
        <begin position="1"/>
        <end position="192"/>
    </location>
</feature>
<dbReference type="EMBL" id="L42023">
    <property type="protein sequence ID" value="AAC22362.1"/>
    <property type="molecule type" value="Genomic_DNA"/>
</dbReference>
<dbReference type="PIR" id="E64087">
    <property type="entry name" value="E64087"/>
</dbReference>
<dbReference type="RefSeq" id="NP_438862.1">
    <property type="nucleotide sequence ID" value="NC_000907.1"/>
</dbReference>
<dbReference type="STRING" id="71421.HI_0703"/>
<dbReference type="EnsemblBacteria" id="AAC22362">
    <property type="protein sequence ID" value="AAC22362"/>
    <property type="gene ID" value="HI_0703"/>
</dbReference>
<dbReference type="KEGG" id="hin:HI_0703"/>
<dbReference type="PATRIC" id="fig|71421.8.peg.734"/>
<dbReference type="eggNOG" id="COG1238">
    <property type="taxonomic scope" value="Bacteria"/>
</dbReference>
<dbReference type="HOGENOM" id="CLU_098634_1_0_6"/>
<dbReference type="OrthoDB" id="9810270at2"/>
<dbReference type="PhylomeDB" id="P44832"/>
<dbReference type="BioCyc" id="HINF71421:G1GJ1-737-MONOMER"/>
<dbReference type="Proteomes" id="UP000000579">
    <property type="component" value="Chromosome"/>
</dbReference>
<dbReference type="GO" id="GO:0005886">
    <property type="term" value="C:plasma membrane"/>
    <property type="evidence" value="ECO:0000318"/>
    <property type="project" value="GO_Central"/>
</dbReference>
<dbReference type="InterPro" id="IPR051311">
    <property type="entry name" value="DedA_domain"/>
</dbReference>
<dbReference type="InterPro" id="IPR032816">
    <property type="entry name" value="VTT_dom"/>
</dbReference>
<dbReference type="PANTHER" id="PTHR42709">
    <property type="entry name" value="ALKALINE PHOSPHATASE LIKE PROTEIN"/>
    <property type="match status" value="1"/>
</dbReference>
<dbReference type="PANTHER" id="PTHR42709:SF11">
    <property type="entry name" value="DEDA FAMILY PROTEIN"/>
    <property type="match status" value="1"/>
</dbReference>
<dbReference type="Pfam" id="PF09335">
    <property type="entry name" value="VTT_dom"/>
    <property type="match status" value="1"/>
</dbReference>
<sequence length="192" mass="21688">MKIFGTMYDKTMEWSKHRFAVFWLSFVSFIEAIFFPIPPDVMLIPMSMSKPKSAVKFAFYTAIASVIGGIIGYAIGFYATDWVENIVQQWGYAAHWAKAVSWFEQWGVLVVFVAGFSPIPYKVFTLCAGVMQMAFFPFVITAFVSRLARFLLVAKLAAWGGEKFAAKLRKSIEIIGWSVVVLAVIAYFILKN</sequence>
<gene>
    <name type="ordered locus">HI_0703</name>
</gene>
<accession>P44832</accession>
<organism>
    <name type="scientific">Haemophilus influenzae (strain ATCC 51907 / DSM 11121 / KW20 / Rd)</name>
    <dbReference type="NCBI Taxonomy" id="71421"/>
    <lineage>
        <taxon>Bacteria</taxon>
        <taxon>Pseudomonadati</taxon>
        <taxon>Pseudomonadota</taxon>
        <taxon>Gammaproteobacteria</taxon>
        <taxon>Pasteurellales</taxon>
        <taxon>Pasteurellaceae</taxon>
        <taxon>Haemophilus</taxon>
    </lineage>
</organism>